<comment type="function">
    <text evidence="1">Catalyzes the N-acylation of UDP-3-O-acylglucosamine using 3-hydroxyacyl-ACP as the acyl donor. Is involved in the biosynthesis of lipid A, a phosphorylated glycolipid that anchors the lipopolysaccharide to the outer membrane of the cell.</text>
</comment>
<comment type="catalytic activity">
    <reaction evidence="1">
        <text>a UDP-3-O-[(3R)-3-hydroxyacyl]-alpha-D-glucosamine + a (3R)-hydroxyacyl-[ACP] = a UDP-2-N,3-O-bis[(3R)-3-hydroxyacyl]-alpha-D-glucosamine + holo-[ACP] + H(+)</text>
        <dbReference type="Rhea" id="RHEA:53836"/>
        <dbReference type="Rhea" id="RHEA-COMP:9685"/>
        <dbReference type="Rhea" id="RHEA-COMP:9945"/>
        <dbReference type="ChEBI" id="CHEBI:15378"/>
        <dbReference type="ChEBI" id="CHEBI:64479"/>
        <dbReference type="ChEBI" id="CHEBI:78827"/>
        <dbReference type="ChEBI" id="CHEBI:137740"/>
        <dbReference type="ChEBI" id="CHEBI:137748"/>
        <dbReference type="EC" id="2.3.1.191"/>
    </reaction>
</comment>
<comment type="pathway">
    <text evidence="1">Bacterial outer membrane biogenesis; LPS lipid A biosynthesis.</text>
</comment>
<comment type="subunit">
    <text evidence="1">Homotrimer.</text>
</comment>
<comment type="similarity">
    <text evidence="1">Belongs to the transferase hexapeptide repeat family. LpxD subfamily.</text>
</comment>
<protein>
    <recommendedName>
        <fullName evidence="1">UDP-3-O-acylglucosamine N-acyltransferase</fullName>
        <ecNumber evidence="1">2.3.1.191</ecNumber>
    </recommendedName>
</protein>
<evidence type="ECO:0000255" key="1">
    <source>
        <dbReference type="HAMAP-Rule" id="MF_00523"/>
    </source>
</evidence>
<gene>
    <name evidence="1" type="primary">lpxD</name>
    <name type="ordered locus">FTA_0570</name>
</gene>
<reference key="1">
    <citation type="journal article" date="2009" name="PLoS ONE">
        <title>Complete genome sequence of Francisella tularensis subspecies holarctica FTNF002-00.</title>
        <authorList>
            <person name="Barabote R.D."/>
            <person name="Xie G."/>
            <person name="Brettin T.S."/>
            <person name="Hinrichs S.H."/>
            <person name="Fey P.D."/>
            <person name="Jay J.J."/>
            <person name="Engle J.L."/>
            <person name="Godbole S.D."/>
            <person name="Noronha J.M."/>
            <person name="Scheuermann R.H."/>
            <person name="Zhou L.W."/>
            <person name="Lion C."/>
            <person name="Dempsey M.P."/>
        </authorList>
    </citation>
    <scope>NUCLEOTIDE SEQUENCE [LARGE SCALE GENOMIC DNA]</scope>
    <source>
        <strain>FTNF002-00 / FTA</strain>
    </source>
</reference>
<dbReference type="EC" id="2.3.1.191" evidence="1"/>
<dbReference type="EMBL" id="CP000803">
    <property type="protein sequence ID" value="ABU61046.1"/>
    <property type="molecule type" value="Genomic_DNA"/>
</dbReference>
<dbReference type="RefSeq" id="WP_003014857.1">
    <property type="nucleotide sequence ID" value="NC_009749.1"/>
</dbReference>
<dbReference type="SMR" id="A7NAP3"/>
<dbReference type="KEGG" id="fta:FTA_0570"/>
<dbReference type="HOGENOM" id="CLU_049865_0_1_6"/>
<dbReference type="UniPathway" id="UPA00973"/>
<dbReference type="GO" id="GO:0016020">
    <property type="term" value="C:membrane"/>
    <property type="evidence" value="ECO:0007669"/>
    <property type="project" value="GOC"/>
</dbReference>
<dbReference type="GO" id="GO:0016410">
    <property type="term" value="F:N-acyltransferase activity"/>
    <property type="evidence" value="ECO:0007669"/>
    <property type="project" value="InterPro"/>
</dbReference>
<dbReference type="GO" id="GO:0009245">
    <property type="term" value="P:lipid A biosynthetic process"/>
    <property type="evidence" value="ECO:0007669"/>
    <property type="project" value="UniProtKB-UniRule"/>
</dbReference>
<dbReference type="CDD" id="cd03352">
    <property type="entry name" value="LbH_LpxD"/>
    <property type="match status" value="1"/>
</dbReference>
<dbReference type="Gene3D" id="2.160.10.10">
    <property type="entry name" value="Hexapeptide repeat proteins"/>
    <property type="match status" value="1"/>
</dbReference>
<dbReference type="Gene3D" id="3.40.1390.10">
    <property type="entry name" value="MurE/MurF, N-terminal domain"/>
    <property type="match status" value="1"/>
</dbReference>
<dbReference type="HAMAP" id="MF_00523">
    <property type="entry name" value="LpxD"/>
    <property type="match status" value="1"/>
</dbReference>
<dbReference type="InterPro" id="IPR001451">
    <property type="entry name" value="Hexapep"/>
</dbReference>
<dbReference type="InterPro" id="IPR018357">
    <property type="entry name" value="Hexapep_transf_CS"/>
</dbReference>
<dbReference type="InterPro" id="IPR007691">
    <property type="entry name" value="LpxD"/>
</dbReference>
<dbReference type="InterPro" id="IPR011004">
    <property type="entry name" value="Trimer_LpxA-like_sf"/>
</dbReference>
<dbReference type="InterPro" id="IPR020573">
    <property type="entry name" value="UDP_GlcNAc_AcTrfase_non-rep"/>
</dbReference>
<dbReference type="NCBIfam" id="TIGR01853">
    <property type="entry name" value="lipid_A_lpxD"/>
    <property type="match status" value="1"/>
</dbReference>
<dbReference type="NCBIfam" id="NF002060">
    <property type="entry name" value="PRK00892.1"/>
    <property type="match status" value="1"/>
</dbReference>
<dbReference type="PANTHER" id="PTHR43378">
    <property type="entry name" value="UDP-3-O-ACYLGLUCOSAMINE N-ACYLTRANSFERASE"/>
    <property type="match status" value="1"/>
</dbReference>
<dbReference type="PANTHER" id="PTHR43378:SF2">
    <property type="entry name" value="UDP-3-O-ACYLGLUCOSAMINE N-ACYLTRANSFERASE 1, MITOCHONDRIAL-RELATED"/>
    <property type="match status" value="1"/>
</dbReference>
<dbReference type="Pfam" id="PF00132">
    <property type="entry name" value="Hexapep"/>
    <property type="match status" value="2"/>
</dbReference>
<dbReference type="Pfam" id="PF14602">
    <property type="entry name" value="Hexapep_2"/>
    <property type="match status" value="1"/>
</dbReference>
<dbReference type="Pfam" id="PF04613">
    <property type="entry name" value="LpxD"/>
    <property type="match status" value="1"/>
</dbReference>
<dbReference type="SUPFAM" id="SSF51161">
    <property type="entry name" value="Trimeric LpxA-like enzymes"/>
    <property type="match status" value="1"/>
</dbReference>
<dbReference type="PROSITE" id="PS00101">
    <property type="entry name" value="HEXAPEP_TRANSFERASES"/>
    <property type="match status" value="2"/>
</dbReference>
<accession>A7NAP3</accession>
<organism>
    <name type="scientific">Francisella tularensis subsp. holarctica (strain FTNF002-00 / FTA)</name>
    <dbReference type="NCBI Taxonomy" id="458234"/>
    <lineage>
        <taxon>Bacteria</taxon>
        <taxon>Pseudomonadati</taxon>
        <taxon>Pseudomonadota</taxon>
        <taxon>Gammaproteobacteria</taxon>
        <taxon>Thiotrichales</taxon>
        <taxon>Francisellaceae</taxon>
        <taxon>Francisella</taxon>
    </lineage>
</organism>
<keyword id="KW-0012">Acyltransferase</keyword>
<keyword id="KW-0441">Lipid A biosynthesis</keyword>
<keyword id="KW-0444">Lipid biosynthesis</keyword>
<keyword id="KW-0443">Lipid metabolism</keyword>
<keyword id="KW-0677">Repeat</keyword>
<keyword id="KW-0808">Transferase</keyword>
<name>LPXD_FRATF</name>
<proteinExistence type="inferred from homology"/>
<sequence>MYSLDFLASKLDGEVKGDKNVEIKKIATLSQAGEGDISFCTNPKYLKALSETKASAVLITEEVLEFCNTNAVVLSNPYMALAKVMELFDKSPRPDGKIHSKAVIAASAIIGENVTIGANAVVGENVVIGDNVYIGACATIDNGTKIGNDTLIKSNVSIAHDVVIGTGCIIHQNAVIGCDGFGNARDEDGSWTKIPQLGRVIIEDDVEIGSGTTVDRGAIDDTIIKKGARIDNLVQIAHNVVIGRNTALAGVTAVAGSTTIGDNCLIGGQSAITGHISICDNTIIGGASNIGKSITKPGMYYAAFEAKPRIQWGRFVAKLAKIDTLITKVKQLEEKIK</sequence>
<feature type="chain" id="PRO_1000050940" description="UDP-3-O-acylglucosamine N-acyltransferase">
    <location>
        <begin position="1"/>
        <end position="337"/>
    </location>
</feature>
<feature type="active site" description="Proton acceptor" evidence="1">
    <location>
        <position position="238"/>
    </location>
</feature>